<sequence>MERAIPGNDTREPAYGERWNGGPGGSTSPFQLPDESPSWTEWRLHYDETNSNQDNPLGFKESWGFGKVVFKRYLRYDGTETSLHRVLGSWTGDSVNYAASRFFGFDQIGCTYSIRFRGVSVTISGGSRTLQHLSEMAIRSKQELLQLTPVQVESDVSRGRPECQTFKEESE</sequence>
<evidence type="ECO:0000250" key="1"/>
<evidence type="ECO:0000256" key="2">
    <source>
        <dbReference type="SAM" id="MobiDB-lite"/>
    </source>
</evidence>
<evidence type="ECO:0000305" key="3"/>
<reference key="1">
    <citation type="journal article" date="1996" name="Phytopathology">
        <title>Different tomato bushy stunt virus strains cause disease outbreaks on solanaceous crops in Spain.</title>
        <authorList>
            <person name="Luis-Areteaga M."/>
            <person name="Rodriguez-Cerezo E."/>
            <person name="Fraile A."/>
            <person name="Saez E."/>
            <person name="Garcia-Arenal F."/>
        </authorList>
        <dbReference type="AGRICOLA" id="IND20581771"/>
    </citation>
    <scope>NUCLEOTIDE SEQUENCE [GENOMIC RNA]</scope>
</reference>
<organismHost>
    <name type="scientific">Capsicum annuum</name>
    <name type="common">Capsicum pepper</name>
    <dbReference type="NCBI Taxonomy" id="4072"/>
</organismHost>
<organismHost>
    <name type="scientific">Malus</name>
    <dbReference type="NCBI Taxonomy" id="3749"/>
</organismHost>
<organismHost>
    <name type="scientific">Pyrus</name>
    <name type="common">pears</name>
    <dbReference type="NCBI Taxonomy" id="3766"/>
</organismHost>
<organismHost>
    <name type="scientific">Solanum lycopersicum</name>
    <name type="common">Tomato</name>
    <name type="synonym">Lycopersicon esculentum</name>
    <dbReference type="NCBI Taxonomy" id="4081"/>
</organismHost>
<organismHost>
    <name type="scientific">Solanum melongena</name>
    <name type="common">eggplant</name>
    <dbReference type="NCBI Taxonomy" id="4111"/>
</organismHost>
<organismHost>
    <name type="scientific">Tolmiea menziesii</name>
    <dbReference type="NCBI Taxonomy" id="29777"/>
</organismHost>
<organismHost>
    <name type="scientific">Tulipa</name>
    <dbReference type="NCBI Taxonomy" id="13305"/>
</organismHost>
<protein>
    <recommendedName>
        <fullName>RNA silencing suppressor p19</fullName>
    </recommendedName>
    <alternativeName>
        <fullName>19 kDa symptom severity modulator</fullName>
    </alternativeName>
</protein>
<accession>P50624</accession>
<comment type="function">
    <text evidence="1">Viral suppressor of RNA silencing which binds specifically to silencing RNAs (siRNAs). Acts as a molecular caliper to specifically select siRNAs based on the length of the duplex region of the RNA (By similarity).</text>
</comment>
<comment type="subunit">
    <text evidence="1">Homodimer.</text>
</comment>
<comment type="similarity">
    <text evidence="3">Belongs to the tombusvirus protein p19 family.</text>
</comment>
<keyword id="KW-0945">Host-virus interaction</keyword>
<keyword id="KW-1090">Inhibition of host innate immune response by virus</keyword>
<keyword id="KW-0694">RNA-binding</keyword>
<keyword id="KW-0941">Suppressor of RNA silencing</keyword>
<keyword id="KW-0899">Viral immunoevasion</keyword>
<name>P19_TBSV8</name>
<organism>
    <name type="scientific">Tomato bushy stunt virus (strain B8)</name>
    <name type="common">TBSV</name>
    <dbReference type="NCBI Taxonomy" id="70155"/>
    <lineage>
        <taxon>Viruses</taxon>
        <taxon>Riboviria</taxon>
        <taxon>Orthornavirae</taxon>
        <taxon>Kitrinoviricota</taxon>
        <taxon>Tolucaviricetes</taxon>
        <taxon>Tolivirales</taxon>
        <taxon>Tombusviridae</taxon>
        <taxon>Procedovirinae</taxon>
        <taxon>Tombusvirus</taxon>
        <taxon>Tombusvirus lycopersici</taxon>
    </lineage>
</organism>
<feature type="chain" id="PRO_0000222878" description="RNA silencing suppressor p19">
    <location>
        <begin position="1"/>
        <end position="171"/>
    </location>
</feature>
<feature type="region of interest" description="Disordered" evidence="2">
    <location>
        <begin position="1"/>
        <end position="32"/>
    </location>
</feature>
<feature type="compositionally biased region" description="Basic and acidic residues" evidence="2">
    <location>
        <begin position="1"/>
        <end position="15"/>
    </location>
</feature>
<dbReference type="EMBL" id="Z68897">
    <property type="protein sequence ID" value="CAA93128.1"/>
    <property type="molecule type" value="Genomic_RNA"/>
</dbReference>
<dbReference type="SMR" id="P50624"/>
<dbReference type="GO" id="GO:0044423">
    <property type="term" value="C:virion component"/>
    <property type="evidence" value="ECO:0007669"/>
    <property type="project" value="InterPro"/>
</dbReference>
<dbReference type="GO" id="GO:0003723">
    <property type="term" value="F:RNA binding"/>
    <property type="evidence" value="ECO:0007669"/>
    <property type="project" value="UniProtKB-KW"/>
</dbReference>
<dbReference type="GO" id="GO:0052170">
    <property type="term" value="P:symbiont-mediated suppression of host innate immune response"/>
    <property type="evidence" value="ECO:0007669"/>
    <property type="project" value="UniProtKB-KW"/>
</dbReference>
<dbReference type="Gene3D" id="3.30.390.180">
    <property type="entry name" value="RNA silencing suppressor P19"/>
    <property type="match status" value="1"/>
</dbReference>
<dbReference type="InterPro" id="IPR004905">
    <property type="entry name" value="Tombusvirus_p19"/>
</dbReference>
<dbReference type="InterPro" id="IPR036131">
    <property type="entry name" value="VP19_sf"/>
</dbReference>
<dbReference type="Pfam" id="PF03220">
    <property type="entry name" value="Tombus_P19"/>
    <property type="match status" value="1"/>
</dbReference>
<dbReference type="SUPFAM" id="SSF103145">
    <property type="entry name" value="Tombusvirus P19 core protein, VP19"/>
    <property type="match status" value="1"/>
</dbReference>
<proteinExistence type="inferred from homology"/>
<gene>
    <name type="ORF">ORF4</name>
</gene>